<reference key="1">
    <citation type="submission" date="2006-02" db="EMBL/GenBank/DDBJ databases">
        <authorList>
            <consortium name="NIH - Mammalian Gene Collection (MGC) project"/>
        </authorList>
    </citation>
    <scope>NUCLEOTIDE SEQUENCE [LARGE SCALE MRNA]</scope>
    <source>
        <strain>Hereford</strain>
        <tissue>Testis</tissue>
    </source>
</reference>
<keyword id="KW-1185">Reference proteome</keyword>
<protein>
    <recommendedName>
        <fullName>Protein DPCD</fullName>
    </recommendedName>
</protein>
<proteinExistence type="evidence at transcript level"/>
<gene>
    <name type="primary">DPCD</name>
</gene>
<evidence type="ECO:0000250" key="1"/>
<evidence type="ECO:0000305" key="2"/>
<name>DPCD_BOVIN</name>
<organism>
    <name type="scientific">Bos taurus</name>
    <name type="common">Bovine</name>
    <dbReference type="NCBI Taxonomy" id="9913"/>
    <lineage>
        <taxon>Eukaryota</taxon>
        <taxon>Metazoa</taxon>
        <taxon>Chordata</taxon>
        <taxon>Craniata</taxon>
        <taxon>Vertebrata</taxon>
        <taxon>Euteleostomi</taxon>
        <taxon>Mammalia</taxon>
        <taxon>Eutheria</taxon>
        <taxon>Laurasiatheria</taxon>
        <taxon>Artiodactyla</taxon>
        <taxon>Ruminantia</taxon>
        <taxon>Pecora</taxon>
        <taxon>Bovidae</taxon>
        <taxon>Bovinae</taxon>
        <taxon>Bos</taxon>
    </lineage>
</organism>
<accession>Q24K21</accession>
<dbReference type="EMBL" id="BC114010">
    <property type="protein sequence ID" value="AAI14011.1"/>
    <property type="molecule type" value="mRNA"/>
</dbReference>
<dbReference type="RefSeq" id="NP_001069213.1">
    <property type="nucleotide sequence ID" value="NM_001075745.2"/>
</dbReference>
<dbReference type="FunCoup" id="Q24K21">
    <property type="interactions" value="2628"/>
</dbReference>
<dbReference type="STRING" id="9913.ENSBTAP00000004655"/>
<dbReference type="PaxDb" id="9913-ENSBTAP00000004655"/>
<dbReference type="Ensembl" id="ENSBTAT00000004655.4">
    <property type="protein sequence ID" value="ENSBTAP00000004655.3"/>
    <property type="gene ID" value="ENSBTAG00000003578.4"/>
</dbReference>
<dbReference type="GeneID" id="516908"/>
<dbReference type="KEGG" id="bta:516908"/>
<dbReference type="CTD" id="25911"/>
<dbReference type="VEuPathDB" id="HostDB:ENSBTAG00000003578"/>
<dbReference type="VGNC" id="VGNC:55947">
    <property type="gene designation" value="DPCD"/>
</dbReference>
<dbReference type="eggNOG" id="ENOG502QUNA">
    <property type="taxonomic scope" value="Eukaryota"/>
</dbReference>
<dbReference type="GeneTree" id="ENSGT00390000014031"/>
<dbReference type="HOGENOM" id="CLU_097313_0_0_1"/>
<dbReference type="InParanoid" id="Q24K21"/>
<dbReference type="OMA" id="PILCEME"/>
<dbReference type="OrthoDB" id="10256139at2759"/>
<dbReference type="TreeFam" id="TF324098"/>
<dbReference type="Proteomes" id="UP000009136">
    <property type="component" value="Chromosome 26"/>
</dbReference>
<dbReference type="Bgee" id="ENSBTAG00000003578">
    <property type="expression patterns" value="Expressed in oocyte and 107 other cell types or tissues"/>
</dbReference>
<dbReference type="GO" id="GO:0005576">
    <property type="term" value="C:extracellular region"/>
    <property type="evidence" value="ECO:0007669"/>
    <property type="project" value="GOC"/>
</dbReference>
<dbReference type="GO" id="GO:0007368">
    <property type="term" value="P:determination of left/right symmetry"/>
    <property type="evidence" value="ECO:0007669"/>
    <property type="project" value="Ensembl"/>
</dbReference>
<dbReference type="GO" id="GO:0003351">
    <property type="term" value="P:epithelial cilium movement involved in extracellular fluid movement"/>
    <property type="evidence" value="ECO:0007669"/>
    <property type="project" value="Ensembl"/>
</dbReference>
<dbReference type="GO" id="GO:0051649">
    <property type="term" value="P:establishment of localization in cell"/>
    <property type="evidence" value="ECO:0007669"/>
    <property type="project" value="Ensembl"/>
</dbReference>
<dbReference type="GO" id="GO:0030317">
    <property type="term" value="P:flagellated sperm motility"/>
    <property type="evidence" value="ECO:0007669"/>
    <property type="project" value="Ensembl"/>
</dbReference>
<dbReference type="GO" id="GO:0021670">
    <property type="term" value="P:lateral ventricle development"/>
    <property type="evidence" value="ECO:0007669"/>
    <property type="project" value="Ensembl"/>
</dbReference>
<dbReference type="GO" id="GO:0007283">
    <property type="term" value="P:spermatogenesis"/>
    <property type="evidence" value="ECO:0007669"/>
    <property type="project" value="Ensembl"/>
</dbReference>
<dbReference type="GO" id="GO:0021678">
    <property type="term" value="P:third ventricle development"/>
    <property type="evidence" value="ECO:0007669"/>
    <property type="project" value="Ensembl"/>
</dbReference>
<dbReference type="InterPro" id="IPR026224">
    <property type="entry name" value="DPCD"/>
</dbReference>
<dbReference type="PANTHER" id="PTHR31921">
    <property type="entry name" value="PROTEIN DPCD"/>
    <property type="match status" value="1"/>
</dbReference>
<dbReference type="PANTHER" id="PTHR31921:SF1">
    <property type="entry name" value="PROTEIN DPCD"/>
    <property type="match status" value="1"/>
</dbReference>
<dbReference type="Pfam" id="PF14913">
    <property type="entry name" value="DPCD"/>
    <property type="match status" value="1"/>
</dbReference>
<dbReference type="PRINTS" id="PR02065">
    <property type="entry name" value="PROTEINDPCD"/>
</dbReference>
<sequence>MAVTGWLESLRAAEKTALLQDGRRKVHYLFPNGKEMAEEYDEKTNELLVRKWRVKSALGALGQWQIEVGEPALPGAGSLGPELITESNANPIFVRKDTKMSFQWRIRNLPYPKDVYNVFVDQKERCVVVRTTNKKYYKKFSIPDLERYQLPLDESLLSFAHANSTLIISYQKPKEVLVAESELQKELKKVKTAHSSDGDCKTQ</sequence>
<feature type="chain" id="PRO_0000323722" description="Protein DPCD">
    <location>
        <begin position="1"/>
        <end position="203"/>
    </location>
</feature>
<comment type="function">
    <text evidence="1">May play a role in the formation or function of ciliated cells.</text>
</comment>
<comment type="similarity">
    <text evidence="2">Belongs to the DPCD family.</text>
</comment>